<comment type="function">
    <text evidence="1">Forms part of the ribosomal stalk which helps the ribosome interact with GTP-bound translation factors.</text>
</comment>
<comment type="subunit">
    <text evidence="1">Part of the ribosomal stalk of the 50S ribosomal subunit. Interacts with L10 and the large rRNA to form the base of the stalk. L10 forms an elongated spine to which L12 dimers bind in a sequential fashion forming a multimeric L10(L12)X complex.</text>
</comment>
<comment type="PTM">
    <text evidence="1">One or more lysine residues are methylated.</text>
</comment>
<comment type="similarity">
    <text evidence="1">Belongs to the universal ribosomal protein uL11 family.</text>
</comment>
<proteinExistence type="inferred from homology"/>
<feature type="chain" id="PRO_0000104297" description="Large ribosomal subunit protein uL11">
    <location>
        <begin position="1"/>
        <end position="141"/>
    </location>
</feature>
<reference key="1">
    <citation type="journal article" date="1999" name="Nature">
        <title>Genomic sequence comparison of two unrelated isolates of the human gastric pathogen Helicobacter pylori.</title>
        <authorList>
            <person name="Alm R.A."/>
            <person name="Ling L.-S.L."/>
            <person name="Moir D.T."/>
            <person name="King B.L."/>
            <person name="Brown E.D."/>
            <person name="Doig P.C."/>
            <person name="Smith D.R."/>
            <person name="Noonan B."/>
            <person name="Guild B.C."/>
            <person name="deJonge B.L."/>
            <person name="Carmel G."/>
            <person name="Tummino P.J."/>
            <person name="Caruso A."/>
            <person name="Uria-Nickelsen M."/>
            <person name="Mills D.M."/>
            <person name="Ives C."/>
            <person name="Gibson R."/>
            <person name="Merberg D."/>
            <person name="Mills S.D."/>
            <person name="Jiang Q."/>
            <person name="Taylor D.E."/>
            <person name="Vovis G.F."/>
            <person name="Trust T.J."/>
        </authorList>
    </citation>
    <scope>NUCLEOTIDE SEQUENCE [LARGE SCALE GENOMIC DNA]</scope>
    <source>
        <strain>J99 / ATCC 700824</strain>
    </source>
</reference>
<keyword id="KW-0488">Methylation</keyword>
<keyword id="KW-0687">Ribonucleoprotein</keyword>
<keyword id="KW-0689">Ribosomal protein</keyword>
<keyword id="KW-0694">RNA-binding</keyword>
<keyword id="KW-0699">rRNA-binding</keyword>
<name>RL11_HELPJ</name>
<protein>
    <recommendedName>
        <fullName evidence="1">Large ribosomal subunit protein uL11</fullName>
    </recommendedName>
    <alternativeName>
        <fullName evidence="2">50S ribosomal protein L11</fullName>
    </alternativeName>
</protein>
<accession>P66053</accession>
<accession>P56037</accession>
<organism>
    <name type="scientific">Helicobacter pylori (strain J99 / ATCC 700824)</name>
    <name type="common">Campylobacter pylori J99</name>
    <dbReference type="NCBI Taxonomy" id="85963"/>
    <lineage>
        <taxon>Bacteria</taxon>
        <taxon>Pseudomonadati</taxon>
        <taxon>Campylobacterota</taxon>
        <taxon>Epsilonproteobacteria</taxon>
        <taxon>Campylobacterales</taxon>
        <taxon>Helicobacteraceae</taxon>
        <taxon>Helicobacter</taxon>
    </lineage>
</organism>
<evidence type="ECO:0000255" key="1">
    <source>
        <dbReference type="HAMAP-Rule" id="MF_00736"/>
    </source>
</evidence>
<evidence type="ECO:0000305" key="2"/>
<sequence length="141" mass="15329">MAKKVVGEIKLQIPAGKANPSPPVGPALGQRGVNIMEFCKAFNERTKDMGSFNIPVIITVYQDKSFTFITKKPPVTDLIKKASGVEKGSDNPLKNKIAKLTHKQVEEIAQLKMEDLNTSTMEAAKKIVMGSARSMGVEVVD</sequence>
<dbReference type="EMBL" id="AE001439">
    <property type="protein sequence ID" value="AAD06703.1"/>
    <property type="molecule type" value="Genomic_DNA"/>
</dbReference>
<dbReference type="RefSeq" id="WP_001085997.1">
    <property type="nucleotide sequence ID" value="NZ_CP011330.1"/>
</dbReference>
<dbReference type="SMR" id="P66053"/>
<dbReference type="GeneID" id="93237670"/>
<dbReference type="KEGG" id="hpj:jhp_1125"/>
<dbReference type="PATRIC" id="fig|85963.30.peg.1452"/>
<dbReference type="eggNOG" id="COG0080">
    <property type="taxonomic scope" value="Bacteria"/>
</dbReference>
<dbReference type="Proteomes" id="UP000000804">
    <property type="component" value="Chromosome"/>
</dbReference>
<dbReference type="GO" id="GO:0022625">
    <property type="term" value="C:cytosolic large ribosomal subunit"/>
    <property type="evidence" value="ECO:0007669"/>
    <property type="project" value="TreeGrafter"/>
</dbReference>
<dbReference type="GO" id="GO:0070180">
    <property type="term" value="F:large ribosomal subunit rRNA binding"/>
    <property type="evidence" value="ECO:0007669"/>
    <property type="project" value="UniProtKB-UniRule"/>
</dbReference>
<dbReference type="GO" id="GO:0003735">
    <property type="term" value="F:structural constituent of ribosome"/>
    <property type="evidence" value="ECO:0007669"/>
    <property type="project" value="InterPro"/>
</dbReference>
<dbReference type="GO" id="GO:0006412">
    <property type="term" value="P:translation"/>
    <property type="evidence" value="ECO:0007669"/>
    <property type="project" value="UniProtKB-UniRule"/>
</dbReference>
<dbReference type="CDD" id="cd00349">
    <property type="entry name" value="Ribosomal_L11"/>
    <property type="match status" value="1"/>
</dbReference>
<dbReference type="FunFam" id="1.10.10.250:FF:000001">
    <property type="entry name" value="50S ribosomal protein L11"/>
    <property type="match status" value="1"/>
</dbReference>
<dbReference type="FunFam" id="3.30.1550.10:FF:000001">
    <property type="entry name" value="50S ribosomal protein L11"/>
    <property type="match status" value="1"/>
</dbReference>
<dbReference type="Gene3D" id="1.10.10.250">
    <property type="entry name" value="Ribosomal protein L11, C-terminal domain"/>
    <property type="match status" value="1"/>
</dbReference>
<dbReference type="Gene3D" id="3.30.1550.10">
    <property type="entry name" value="Ribosomal protein L11/L12, N-terminal domain"/>
    <property type="match status" value="1"/>
</dbReference>
<dbReference type="HAMAP" id="MF_00736">
    <property type="entry name" value="Ribosomal_uL11"/>
    <property type="match status" value="1"/>
</dbReference>
<dbReference type="InterPro" id="IPR000911">
    <property type="entry name" value="Ribosomal_uL11"/>
</dbReference>
<dbReference type="InterPro" id="IPR006519">
    <property type="entry name" value="Ribosomal_uL11_bac-typ"/>
</dbReference>
<dbReference type="InterPro" id="IPR020783">
    <property type="entry name" value="Ribosomal_uL11_C"/>
</dbReference>
<dbReference type="InterPro" id="IPR036769">
    <property type="entry name" value="Ribosomal_uL11_C_sf"/>
</dbReference>
<dbReference type="InterPro" id="IPR020785">
    <property type="entry name" value="Ribosomal_uL11_CS"/>
</dbReference>
<dbReference type="InterPro" id="IPR020784">
    <property type="entry name" value="Ribosomal_uL11_N"/>
</dbReference>
<dbReference type="InterPro" id="IPR036796">
    <property type="entry name" value="Ribosomal_uL11_N_sf"/>
</dbReference>
<dbReference type="NCBIfam" id="TIGR01632">
    <property type="entry name" value="L11_bact"/>
    <property type="match status" value="1"/>
</dbReference>
<dbReference type="PANTHER" id="PTHR11661">
    <property type="entry name" value="60S RIBOSOMAL PROTEIN L12"/>
    <property type="match status" value="1"/>
</dbReference>
<dbReference type="PANTHER" id="PTHR11661:SF1">
    <property type="entry name" value="LARGE RIBOSOMAL SUBUNIT PROTEIN UL11M"/>
    <property type="match status" value="1"/>
</dbReference>
<dbReference type="Pfam" id="PF00298">
    <property type="entry name" value="Ribosomal_L11"/>
    <property type="match status" value="1"/>
</dbReference>
<dbReference type="Pfam" id="PF03946">
    <property type="entry name" value="Ribosomal_L11_N"/>
    <property type="match status" value="1"/>
</dbReference>
<dbReference type="SMART" id="SM00649">
    <property type="entry name" value="RL11"/>
    <property type="match status" value="1"/>
</dbReference>
<dbReference type="SUPFAM" id="SSF54747">
    <property type="entry name" value="Ribosomal L11/L12e N-terminal domain"/>
    <property type="match status" value="1"/>
</dbReference>
<dbReference type="SUPFAM" id="SSF46906">
    <property type="entry name" value="Ribosomal protein L11, C-terminal domain"/>
    <property type="match status" value="1"/>
</dbReference>
<dbReference type="PROSITE" id="PS00359">
    <property type="entry name" value="RIBOSOMAL_L11"/>
    <property type="match status" value="1"/>
</dbReference>
<gene>
    <name evidence="1" type="primary">rplK</name>
    <name type="ordered locus">jhp_1125</name>
</gene>